<proteinExistence type="inferred from homology"/>
<accession>A1UBP0</accession>
<comment type="function">
    <text evidence="1">Protein S19 forms a complex with S13 that binds strongly to the 16S ribosomal RNA.</text>
</comment>
<comment type="similarity">
    <text evidence="1">Belongs to the universal ribosomal protein uS19 family.</text>
</comment>
<dbReference type="EMBL" id="CP000518">
    <property type="protein sequence ID" value="ABL90248.1"/>
    <property type="molecule type" value="Genomic_DNA"/>
</dbReference>
<dbReference type="SMR" id="A1UBP0"/>
<dbReference type="STRING" id="189918.Mkms_1034"/>
<dbReference type="KEGG" id="mkm:Mkms_1034"/>
<dbReference type="HOGENOM" id="CLU_144911_0_1_11"/>
<dbReference type="OrthoDB" id="9797833at2"/>
<dbReference type="GO" id="GO:0005737">
    <property type="term" value="C:cytoplasm"/>
    <property type="evidence" value="ECO:0007669"/>
    <property type="project" value="UniProtKB-ARBA"/>
</dbReference>
<dbReference type="GO" id="GO:0015935">
    <property type="term" value="C:small ribosomal subunit"/>
    <property type="evidence" value="ECO:0007669"/>
    <property type="project" value="InterPro"/>
</dbReference>
<dbReference type="GO" id="GO:0019843">
    <property type="term" value="F:rRNA binding"/>
    <property type="evidence" value="ECO:0007669"/>
    <property type="project" value="UniProtKB-UniRule"/>
</dbReference>
<dbReference type="GO" id="GO:0003735">
    <property type="term" value="F:structural constituent of ribosome"/>
    <property type="evidence" value="ECO:0007669"/>
    <property type="project" value="InterPro"/>
</dbReference>
<dbReference type="GO" id="GO:0000028">
    <property type="term" value="P:ribosomal small subunit assembly"/>
    <property type="evidence" value="ECO:0007669"/>
    <property type="project" value="TreeGrafter"/>
</dbReference>
<dbReference type="GO" id="GO:0006412">
    <property type="term" value="P:translation"/>
    <property type="evidence" value="ECO:0007669"/>
    <property type="project" value="UniProtKB-UniRule"/>
</dbReference>
<dbReference type="FunFam" id="3.30.860.10:FF:000001">
    <property type="entry name" value="30S ribosomal protein S19"/>
    <property type="match status" value="1"/>
</dbReference>
<dbReference type="Gene3D" id="3.30.860.10">
    <property type="entry name" value="30s Ribosomal Protein S19, Chain A"/>
    <property type="match status" value="1"/>
</dbReference>
<dbReference type="HAMAP" id="MF_00531">
    <property type="entry name" value="Ribosomal_uS19"/>
    <property type="match status" value="1"/>
</dbReference>
<dbReference type="InterPro" id="IPR002222">
    <property type="entry name" value="Ribosomal_uS19"/>
</dbReference>
<dbReference type="InterPro" id="IPR005732">
    <property type="entry name" value="Ribosomal_uS19_bac-type"/>
</dbReference>
<dbReference type="InterPro" id="IPR020934">
    <property type="entry name" value="Ribosomal_uS19_CS"/>
</dbReference>
<dbReference type="InterPro" id="IPR023575">
    <property type="entry name" value="Ribosomal_uS19_SF"/>
</dbReference>
<dbReference type="NCBIfam" id="TIGR01050">
    <property type="entry name" value="rpsS_bact"/>
    <property type="match status" value="1"/>
</dbReference>
<dbReference type="PANTHER" id="PTHR11880">
    <property type="entry name" value="RIBOSOMAL PROTEIN S19P FAMILY MEMBER"/>
    <property type="match status" value="1"/>
</dbReference>
<dbReference type="PANTHER" id="PTHR11880:SF8">
    <property type="entry name" value="SMALL RIBOSOMAL SUBUNIT PROTEIN US19M"/>
    <property type="match status" value="1"/>
</dbReference>
<dbReference type="Pfam" id="PF00203">
    <property type="entry name" value="Ribosomal_S19"/>
    <property type="match status" value="1"/>
</dbReference>
<dbReference type="PIRSF" id="PIRSF002144">
    <property type="entry name" value="Ribosomal_S19"/>
    <property type="match status" value="1"/>
</dbReference>
<dbReference type="PRINTS" id="PR00975">
    <property type="entry name" value="RIBOSOMALS19"/>
</dbReference>
<dbReference type="SUPFAM" id="SSF54570">
    <property type="entry name" value="Ribosomal protein S19"/>
    <property type="match status" value="1"/>
</dbReference>
<dbReference type="PROSITE" id="PS00323">
    <property type="entry name" value="RIBOSOMAL_S19"/>
    <property type="match status" value="1"/>
</dbReference>
<reference key="1">
    <citation type="submission" date="2006-12" db="EMBL/GenBank/DDBJ databases">
        <title>Complete sequence of chromosome of Mycobacterium sp. KMS.</title>
        <authorList>
            <consortium name="US DOE Joint Genome Institute"/>
            <person name="Copeland A."/>
            <person name="Lucas S."/>
            <person name="Lapidus A."/>
            <person name="Barry K."/>
            <person name="Detter J.C."/>
            <person name="Glavina del Rio T."/>
            <person name="Hammon N."/>
            <person name="Israni S."/>
            <person name="Dalin E."/>
            <person name="Tice H."/>
            <person name="Pitluck S."/>
            <person name="Kiss H."/>
            <person name="Brettin T."/>
            <person name="Bruce D."/>
            <person name="Han C."/>
            <person name="Tapia R."/>
            <person name="Gilna P."/>
            <person name="Schmutz J."/>
            <person name="Larimer F."/>
            <person name="Land M."/>
            <person name="Hauser L."/>
            <person name="Kyrpides N."/>
            <person name="Mikhailova N."/>
            <person name="Miller C.D."/>
            <person name="Richardson P."/>
        </authorList>
    </citation>
    <scope>NUCLEOTIDE SEQUENCE [LARGE SCALE GENOMIC DNA]</scope>
    <source>
        <strain>KMS</strain>
    </source>
</reference>
<feature type="chain" id="PRO_1000051081" description="Small ribosomal subunit protein uS19">
    <location>
        <begin position="1"/>
        <end position="93"/>
    </location>
</feature>
<gene>
    <name evidence="1" type="primary">rpsS</name>
    <name type="ordered locus">Mkms_1034</name>
</gene>
<keyword id="KW-0687">Ribonucleoprotein</keyword>
<keyword id="KW-0689">Ribosomal protein</keyword>
<keyword id="KW-0694">RNA-binding</keyword>
<keyword id="KW-0699">rRNA-binding</keyword>
<organism>
    <name type="scientific">Mycobacterium sp. (strain KMS)</name>
    <dbReference type="NCBI Taxonomy" id="189918"/>
    <lineage>
        <taxon>Bacteria</taxon>
        <taxon>Bacillati</taxon>
        <taxon>Actinomycetota</taxon>
        <taxon>Actinomycetes</taxon>
        <taxon>Mycobacteriales</taxon>
        <taxon>Mycobacteriaceae</taxon>
        <taxon>Mycobacterium</taxon>
    </lineage>
</organism>
<name>RS19_MYCSK</name>
<evidence type="ECO:0000255" key="1">
    <source>
        <dbReference type="HAMAP-Rule" id="MF_00531"/>
    </source>
</evidence>
<evidence type="ECO:0000305" key="2"/>
<protein>
    <recommendedName>
        <fullName evidence="1">Small ribosomal subunit protein uS19</fullName>
    </recommendedName>
    <alternativeName>
        <fullName evidence="2">30S ribosomal protein S19</fullName>
    </alternativeName>
</protein>
<sequence>MPRSLKKGPFVDDHLLKKVDVQNDKNTKQVIKTWSRRSTIIPDFIGHTFAVHDGRKHVPVFVTEAMVGHKLGEFAPTRTFKGHIKDDRKSKRR</sequence>